<organism>
    <name type="scientific">Homo sapiens</name>
    <name type="common">Human</name>
    <dbReference type="NCBI Taxonomy" id="9606"/>
    <lineage>
        <taxon>Eukaryota</taxon>
        <taxon>Metazoa</taxon>
        <taxon>Chordata</taxon>
        <taxon>Craniata</taxon>
        <taxon>Vertebrata</taxon>
        <taxon>Euteleostomi</taxon>
        <taxon>Mammalia</taxon>
        <taxon>Eutheria</taxon>
        <taxon>Euarchontoglires</taxon>
        <taxon>Primates</taxon>
        <taxon>Haplorrhini</taxon>
        <taxon>Catarrhini</taxon>
        <taxon>Hominidae</taxon>
        <taxon>Homo</taxon>
    </lineage>
</organism>
<protein>
    <recommendedName>
        <fullName evidence="29">Toll-like receptor 2</fullName>
    </recommendedName>
    <alternativeName>
        <fullName>Toll/interleukin-1 receptor-like protein 4</fullName>
    </alternativeName>
    <cdAntigenName>CD282</cdAntigenName>
</protein>
<gene>
    <name evidence="30" type="primary">TLR2</name>
    <name type="synonym">TIL4</name>
</gene>
<keyword id="KW-0002">3D-structure</keyword>
<keyword id="KW-0968">Cytoplasmic vesicle</keyword>
<keyword id="KW-1015">Disulfide bond</keyword>
<keyword id="KW-0325">Glycoprotein</keyword>
<keyword id="KW-0391">Immunity</keyword>
<keyword id="KW-0395">Inflammatory response</keyword>
<keyword id="KW-0399">Innate immunity</keyword>
<keyword id="KW-1017">Isopeptide bond</keyword>
<keyword id="KW-0433">Leucine-rich repeat</keyword>
<keyword id="KW-0472">Membrane</keyword>
<keyword id="KW-0520">NAD</keyword>
<keyword id="KW-1267">Proteomics identification</keyword>
<keyword id="KW-0675">Receptor</keyword>
<keyword id="KW-1185">Reference proteome</keyword>
<keyword id="KW-0677">Repeat</keyword>
<keyword id="KW-0732">Signal</keyword>
<keyword id="KW-0812">Transmembrane</keyword>
<keyword id="KW-1133">Transmembrane helix</keyword>
<keyword id="KW-0832">Ubl conjugation</keyword>
<comment type="function">
    <text evidence="3 6 7 9 14 15 16 18 19 22">Cooperates with LY96 to mediate the innate immune response to bacterial lipoproteins and other microbial cell wall components. Cooperates with TLR1 or TLR6 to mediate the innate immune response to bacterial lipoproteins or lipopeptides (PubMed:17889651, PubMed:21078852). Acts via MYD88 and TRAF6, leading to NF-kappa-B activation, cytokine secretion and the inflammatory response. May also activate immune cells and promote apoptosis in response to the lipid moiety of lipoproteins (PubMed:10426995, PubMed:10426996). Recognizes mycoplasmal macrophage-activating lipopeptide-2kD (MALP-2), soluble tuberculosis factor (STF), phenol-soluble modulin (PSM) and B.burgdorferi outer surface protein A lipoprotein (OspA-L) cooperatively with TLR6 (PubMed:11441107). Stimulation of monocytes in vitro with M.tuberculosis PstS1 induces p38 MAPK and ERK1/2 activation primarily via this receptor, but also partially via TLR4 (PubMed:16622205). MAPK activation in response to bacterial peptidoglycan also occurs via this receptor (PubMed:16622205). Acts as a receptor for M.tuberculosis lipoproteins LprA, LprG, LpqH and PstS1, some lipoproteins are dependent on other coreceptors (TLR1, CD14 and/or CD36); the lipoproteins act as agonists to modulate antigen presenting cell functions in response to the pathogen (PubMed:19362712). M.tuberculosis HSP70 (dnaK) but not HSP65 (groEL-2) acts via this protein to stimulate NF-kappa-B expression (PubMed:15809303). Recognizes M.tuberculosis major T-antigen EsxA (ESAT-6) which inhibits downstream MYD88-dependent signaling (shown in mouse) (By similarity). Forms activation clusters composed of several receptors depending on the ligand, these clusters trigger signaling from the cell surface and subsequently are targeted to the Golgi in a lipid-raft dependent pathway. Forms the cluster TLR2:TLR6:CD14:CD36 in response to diacylated lipopeptides and TLR2:TLR1:CD14 in response to triacylated lipopeptides (PubMed:16880211). Required for normal uptake of M.tuberculosis, a process that is inhibited by M.tuberculosis LppM (By similarity).</text>
</comment>
<comment type="subunit">
    <text evidence="3 11 16 17 18 25 26">Interacts with LY96, TLR1 and TLR6 (via extracellular domain) (PubMed:17889651). TLR2 seems to exist in heterodimers with either TLR1 or TLR6 before stimulation by the ligand. The heterodimers form bigger oligomers in response to their corresponding ligands as well as further heterotypic associations with other receptors such as CD14 and/or CD36 (PubMed:16880211). Binds MYD88 (via TIR domain). Interacts with TICAM1 (PubMed:12471095). Interacts with CNPY3 (By similarity). Interacts with ATG16L1 (PubMed:23376921). Interacts with PPP1R11 (By similarity). Interacts with TICAM2 (PubMed:25385819). Interacts with TIRAP (PubMed:17322885).</text>
</comment>
<comment type="subunit">
    <text evidence="21">(Microbial infection) Interacts with M.tuberculosis EsxA.</text>
</comment>
<comment type="subunit">
    <text evidence="21">(Microbial infection) Interacts with M.bovis MPB83.</text>
</comment>
<comment type="subunit">
    <text evidence="24">(Microbial infection) Interacts with Staphylococcus aureus protein SSL5.</text>
</comment>
<comment type="interaction">
    <interactant intactId="EBI-973722">
        <id>O60603</id>
    </interactant>
    <interactant intactId="EBI-489411">
        <id>P61073</id>
        <label>CXCR4</label>
    </interactant>
    <organismsDiffer>false</organismsDiffer>
    <experiments>3</experiments>
</comment>
<comment type="interaction">
    <interactant intactId="EBI-973722">
        <id>O60603</id>
    </interactant>
    <interactant intactId="EBI-297353">
        <id>P00533</id>
        <label>EGFR</label>
    </interactant>
    <organismsDiffer>false</organismsDiffer>
    <experiments>3</experiments>
</comment>
<comment type="interaction">
    <interactant intactId="EBI-973722">
        <id>O60603</id>
    </interactant>
    <interactant intactId="EBI-447677">
        <id>Q99836</id>
        <label>MYD88</label>
    </interactant>
    <organismsDiffer>false</organismsDiffer>
    <experiments>4</experiments>
</comment>
<comment type="interaction">
    <interactant intactId="EBI-973722">
        <id>O60603</id>
    </interactant>
    <interactant intactId="EBI-9009517">
        <id>Q15399</id>
        <label>TLR1</label>
    </interactant>
    <organismsDiffer>false</organismsDiffer>
    <experiments>3</experiments>
</comment>
<comment type="interaction">
    <interactant intactId="EBI-973722">
        <id>O60603</id>
    </interactant>
    <interactant intactId="EBI-16825459">
        <id>Q9BXR5</id>
        <label>TLR10</label>
    </interactant>
    <organismsDiffer>false</organismsDiffer>
    <experiments>3</experiments>
</comment>
<comment type="interaction">
    <interactant intactId="EBI-973722">
        <id>O60603</id>
    </interactant>
    <interactant intactId="EBI-973722">
        <id>O60603</id>
        <label>TLR2</label>
    </interactant>
    <organismsDiffer>false</organismsDiffer>
    <experiments>4</experiments>
</comment>
<comment type="interaction">
    <interactant intactId="EBI-973722">
        <id>O60603</id>
    </interactant>
    <interactant intactId="EBI-13940779">
        <id>Q9Y2C9</id>
        <label>TLR6</label>
    </interactant>
    <organismsDiffer>false</organismsDiffer>
    <experiments>5</experiments>
</comment>
<comment type="interaction">
    <interactant intactId="EBI-973722">
        <id>O60603</id>
    </interactant>
    <interactant intactId="EBI-953824">
        <id>Q96DA0</id>
        <label>ZG16B</label>
    </interactant>
    <organismsDiffer>false</organismsDiffer>
    <experiments>3</experiments>
</comment>
<comment type="subcellular location">
    <subcellularLocation>
        <location evidence="3">Membrane</location>
        <topology evidence="4">Single-pass type I membrane protein</topology>
    </subcellularLocation>
    <subcellularLocation>
        <location evidence="3">Cytoplasmic vesicle</location>
        <location evidence="3">Phagosome membrane</location>
        <topology evidence="4">Single-pass type I membrane protein</topology>
    </subcellularLocation>
    <subcellularLocation>
        <location evidence="16">Membrane raft</location>
    </subcellularLocation>
    <text evidence="16">Does not reside in lipid rafts before stimulation but accumulates increasingly in the raft upon the presence of the microbial ligand. In response to diacylated lipoproteins, TLR2:TLR6 heterodimers are recruited in lipid rafts, this recruitment determines the intracellular targeting to the Golgi apparatus. Triacylated lipoproteins induce the same mechanism for TLR2:TLR1 heterodimers.</text>
</comment>
<comment type="tissue specificity">
    <text>Highly expressed in peripheral blood leukocytes, in particular in monocytes, in bone marrow, lymph node and in spleen. Also detected in lung and in fetal liver. Levels are low in other tissues.</text>
</comment>
<comment type="induction">
    <text evidence="28">(Microbial infection) In macrophages, induced by SARS-CoV-2 infection.</text>
</comment>
<comment type="domain">
    <text evidence="1">Ester-bound lipid substrates are bound through a crevice formed between the LRR 11 and LRR 12.</text>
</comment>
<comment type="domain">
    <text evidence="25">The ATG16L1-binding motif mediates interaction with ATG16L1.</text>
</comment>
<comment type="PTM">
    <text evidence="13 18">Glycosylation of Asn-442 is critical for secretion of the N-terminal ectodomain of TLR2.</text>
</comment>
<comment type="PTM">
    <text evidence="3 27">Ubiquitinated at Lys-754 by PPP1R11, leading to its degradation (PubMed:27805901). Deubiquitinated by USP2 (By similarity).</text>
</comment>
<comment type="polymorphism">
    <text evidence="10 12">Genetic variations in TLR2 are associated with susceptibility to leprosy [MIM:246300]. Leprosy is a chronic disease associated with depressed cellular (but not humoral) immunity, the bacterium requires a lower temperature than 37 degrees Celsius and thrives particularly in peripheral Schwann cells and macrophages. The Trp-677 polymorphism in the intracellular domain of TLR2 has a role in susceptibility to lepromatous leprosy. Wild-type TLR2 mediates CD14-enhanced Mycobacterium leprae-dependent activation of NFKB1, but TLR2 containing the Trp-677 polymorphism did not. The impaired function of the Trp-677 polymorphism provides a molecular mechanism for the poor cellular immune response associated with lepromatous leprosy.</text>
</comment>
<comment type="similarity">
    <text evidence="29">Belongs to the Toll-like receptor family.</text>
</comment>
<comment type="caution">
    <text evidence="2 29">In some plant proteins and in human SARM1, the TIR domain has NAD(+) hydrolase (NADase) activity (By similarity). However, despite the presence of the catalytic Asp residue, the isolated TIR domain of human TLR4 lacks NADase activity (By similarity). Based on this, it is unlikely that Toll-like receptors have NADase activity.</text>
</comment>
<name>TLR2_HUMAN</name>
<accession>O60603</accession>
<accession>B3Y612</accession>
<accession>D1CS45</accession>
<accession>D1CS48</accession>
<accession>D1CS49</accession>
<accession>O15454</accession>
<accession>Q8NI00</accession>
<reference key="1">
    <citation type="journal article" date="1998" name="Blood">
        <title>Cloning and characterization of two Toll/Interleukin-1 receptor-like genes TIL3 and TIL4: evidence for a multi-gene receptor family in humans.</title>
        <authorList>
            <person name="Chaudhary P.M."/>
            <person name="Ferguson C."/>
            <person name="Nguyen V."/>
            <person name="Nguyen O."/>
            <person name="Massa H.F."/>
            <person name="Eby M."/>
            <person name="Jasmin A."/>
            <person name="Trask B.J."/>
            <person name="Hood L."/>
            <person name="Nelson P.S."/>
        </authorList>
    </citation>
    <scope>NUCLEOTIDE SEQUENCE [MRNA]</scope>
    <source>
        <tissue>Leukocyte</tissue>
        <tissue>Prostate</tissue>
    </source>
</reference>
<reference key="2">
    <citation type="journal article" date="1998" name="Proc. Natl. Acad. Sci. U.S.A.">
        <title>A family of human receptors structurally related to Drosophila Toll.</title>
        <authorList>
            <person name="Rock F.L."/>
            <person name="Hardiman G."/>
            <person name="Timans J.C."/>
            <person name="Kastelein R.A."/>
            <person name="Bazan J.F."/>
        </authorList>
    </citation>
    <scope>NUCLEOTIDE SEQUENCE [MRNA]</scope>
</reference>
<reference key="3">
    <citation type="journal article" date="1998" name="Nature">
        <title>Toll-like receptor-2 mediates lipopolysaccharide-induced cellular signalling.</title>
        <authorList>
            <person name="Yang R.-B."/>
            <person name="Mark M.R."/>
            <person name="Gray A.M."/>
            <person name="Huang A."/>
            <person name="Xie M.-H."/>
            <person name="Zhang M."/>
            <person name="Goddard A.D."/>
            <person name="Wood W.I."/>
            <person name="Gurney A.L."/>
            <person name="Godowski P.J."/>
        </authorList>
    </citation>
    <scope>NUCLEOTIDE SEQUENCE [MRNA]</scope>
    <scope>RESPONSE TO LIPOPOLYSACCHARIDE</scope>
    <source>
        <tissue>Fetal lung</tissue>
    </source>
</reference>
<reference key="4">
    <citation type="journal article" date="2008" name="Immunogenetics">
        <title>Natural selection in the TLR-related genes in the course of primate evolution.</title>
        <authorList>
            <person name="Nakajima T."/>
            <person name="Ohtani H."/>
            <person name="Satta Y."/>
            <person name="Uno Y."/>
            <person name="Akari H."/>
            <person name="Ishida T."/>
            <person name="Kimura A."/>
        </authorList>
    </citation>
    <scope>NUCLEOTIDE SEQUENCE [MRNA]</scope>
</reference>
<reference key="5">
    <citation type="journal article" date="2009" name="PLoS ONE">
        <title>The heterogeneous allelic repertoire of human Toll-Like receptor (TLR) genes.</title>
        <authorList>
            <person name="Georgel P."/>
            <person name="Macquin C."/>
            <person name="Bahram S."/>
        </authorList>
    </citation>
    <scope>NUCLEOTIDE SEQUENCE [MRNA]</scope>
    <scope>VARIANTS HIS-631 AND GLN-753</scope>
</reference>
<reference key="6">
    <citation type="submission" date="2005-09" db="EMBL/GenBank/DDBJ databases">
        <authorList>
            <person name="Mural R.J."/>
            <person name="Istrail S."/>
            <person name="Sutton G.G."/>
            <person name="Florea L."/>
            <person name="Halpern A.L."/>
            <person name="Mobarry C.M."/>
            <person name="Lippert R."/>
            <person name="Walenz B."/>
            <person name="Shatkay H."/>
            <person name="Dew I."/>
            <person name="Miller J.R."/>
            <person name="Flanigan M.J."/>
            <person name="Edwards N.J."/>
            <person name="Bolanos R."/>
            <person name="Fasulo D."/>
            <person name="Halldorsson B.V."/>
            <person name="Hannenhalli S."/>
            <person name="Turner R."/>
            <person name="Yooseph S."/>
            <person name="Lu F."/>
            <person name="Nusskern D.R."/>
            <person name="Shue B.C."/>
            <person name="Zheng X.H."/>
            <person name="Zhong F."/>
            <person name="Delcher A.L."/>
            <person name="Huson D.H."/>
            <person name="Kravitz S.A."/>
            <person name="Mouchard L."/>
            <person name="Reinert K."/>
            <person name="Remington K.A."/>
            <person name="Clark A.G."/>
            <person name="Waterman M.S."/>
            <person name="Eichler E.E."/>
            <person name="Adams M.D."/>
            <person name="Hunkapiller M.W."/>
            <person name="Myers E.W."/>
            <person name="Venter J.C."/>
        </authorList>
    </citation>
    <scope>NUCLEOTIDE SEQUENCE [LARGE SCALE GENOMIC DNA]</scope>
</reference>
<reference key="7">
    <citation type="journal article" date="2004" name="Genome Res.">
        <title>The status, quality, and expansion of the NIH full-length cDNA project: the Mammalian Gene Collection (MGC).</title>
        <authorList>
            <consortium name="The MGC Project Team"/>
        </authorList>
    </citation>
    <scope>NUCLEOTIDE SEQUENCE [LARGE SCALE MRNA]</scope>
    <source>
        <tissue>Blood</tissue>
    </source>
</reference>
<reference key="8">
    <citation type="journal article" date="2002" name="Di 4 Jun Yi Da Xue Xue Bao">
        <title>Cloning and sequencing of extracellular domain and its N-terminal and C-terminal fragments of Toll-like receptor 2.</title>
        <authorList>
            <person name="Zhang L."/>
            <person name="Yu W.B."/>
            <person name="Ma Y.Y."/>
        </authorList>
    </citation>
    <scope>NUCLEOTIDE SEQUENCE [MRNA] OF 1-586</scope>
</reference>
<reference key="9">
    <citation type="journal article" date="1999" name="Science">
        <title>Host defense mechanisms triggered by microbial lipoproteins through Toll-like receptors.</title>
        <authorList>
            <person name="Brightbill H.D."/>
            <person name="Libraty D.H."/>
            <person name="Krutzik S.R."/>
            <person name="Yang R.B."/>
            <person name="Belisle J.T."/>
            <person name="Bleharski J.R."/>
            <person name="Maitland M."/>
            <person name="Norgard M.V."/>
            <person name="Plevy S.E."/>
            <person name="Smale S.T."/>
            <person name="Brennan P.J."/>
            <person name="Bloom B.R."/>
            <person name="Godowski P.J."/>
            <person name="Modlin R.L."/>
        </authorList>
    </citation>
    <scope>FUNCTION</scope>
    <source>
        <tissue>T-cell</tissue>
    </source>
</reference>
<reference key="10">
    <citation type="journal article" date="1999" name="Science">
        <title>Cell activation and apoptosis by bacterial lipoproteins through Toll-like receptor-2.</title>
        <authorList>
            <person name="Aliprantis A.O."/>
            <person name="Yang R.-B."/>
            <person name="Mark M.R."/>
            <person name="Suggett S."/>
            <person name="Devaux B."/>
            <person name="Radolf J.D."/>
            <person name="Klimpel G.R."/>
            <person name="Godowski P.J."/>
            <person name="Zychlinsky A."/>
        </authorList>
    </citation>
    <scope>FUNCTION</scope>
</reference>
<reference key="11">
    <citation type="journal article" date="2001" name="J. Immunol.">
        <title>Cooperation of Toll-like receptor 2 and 6 for cellular activation by soluble tuberculosis factor and Borrelia burgdorferi outer surface protein A lipoprotein: role of Toll-interacting protein and IL-1 receptor signaling molecules in Toll-like receptor 2 signaling.</title>
        <authorList>
            <person name="Bulut Y."/>
            <person name="Faure E."/>
            <person name="Thomas L."/>
            <person name="Equils O."/>
            <person name="Arditi M."/>
        </authorList>
    </citation>
    <scope>FUNCTION</scope>
</reference>
<reference key="12">
    <citation type="journal article" date="2002" name="J. Immunol.">
        <title>A novel Toll/IL-1 receptor domain-containing adapter that preferentially activates the IFN-beta promoter in the Toll-like receptor signaling.</title>
        <authorList>
            <person name="Yamamoto M."/>
            <person name="Sato S."/>
            <person name="Mori K."/>
            <person name="Hoshino K."/>
            <person name="Takeuchi O."/>
            <person name="Takeda K."/>
            <person name="Akira S."/>
        </authorList>
    </citation>
    <scope>INTERACTION WITH TICAM1</scope>
</reference>
<reference key="13">
    <citation type="journal article" date="2006" name="J. Biol. Chem.">
        <title>Membrane sorting of toll-like receptor (TLR)-2/6 and TLR2/1 heterodimers at the cell surface determines heterotypic associations with CD36 and intracellular targeting.</title>
        <authorList>
            <person name="Triantafilou M."/>
            <person name="Gamper F.G."/>
            <person name="Haston R.M."/>
            <person name="Mouratis M.A."/>
            <person name="Morath S."/>
            <person name="Hartung T."/>
            <person name="Triantafilou K."/>
        </authorList>
    </citation>
    <scope>FUNCTION</scope>
    <scope>SUBCELLULAR LOCATION</scope>
    <scope>INTERACTION WITH CD14; CD36; TLR1 AND TLR6</scope>
</reference>
<reference key="14">
    <citation type="journal article" date="2004" name="J. Biol. Chem.">
        <title>Four N-linked glycosylation sites in human toll-like receptor 2 cooperate to direct efficient biosynthesis and secretion.</title>
        <authorList>
            <person name="Weber A.N."/>
            <person name="Morse M.A."/>
            <person name="Gay N.J."/>
        </authorList>
    </citation>
    <scope>GLYCOSYLATION AT ASN-114; ASN-199 AND ASN-442</scope>
    <scope>MUTAGENESIS OF ASN-114; ASN-199; THR-416 AND ASN-442</scope>
</reference>
<reference key="15">
    <citation type="journal article" date="2005" name="J. Biol. Chem.">
        <title>Mycobacterium tuberculosis heat shock proteins use diverse Toll-like receptor pathways to activate pro-inflammatory signals.</title>
        <authorList>
            <person name="Bulut Y."/>
            <person name="Michelsen K.S."/>
            <person name="Hayrapetian L."/>
            <person name="Naiki Y."/>
            <person name="Spallek R."/>
            <person name="Singh M."/>
            <person name="Arditi M."/>
        </authorList>
    </citation>
    <scope>FUNCTION</scope>
</reference>
<reference key="16">
    <citation type="journal article" date="2006" name="Infect. Immun.">
        <title>The mycobacterial 38-kilodalton glycolipoprotein antigen activates the mitogen-activated protein kinase pathway and release of proinflammatory cytokines through Toll-like receptors 2 and 4 in human monocytes.</title>
        <authorList>
            <person name="Jung S.B."/>
            <person name="Yang C.S."/>
            <person name="Lee J.S."/>
            <person name="Shin A.R."/>
            <person name="Jung S.S."/>
            <person name="Son J.W."/>
            <person name="Harding C.V."/>
            <person name="Kim H.J."/>
            <person name="Park J.K."/>
            <person name="Paik T.H."/>
            <person name="Song C.H."/>
            <person name="Jo E.K."/>
        </authorList>
    </citation>
    <scope>FUNCTION</scope>
    <source>
        <tissue>Monocyte</tissue>
    </source>
</reference>
<reference key="17">
    <citation type="journal article" date="2007" name="Nat. Genet.">
        <title>A Mal functional variant is associated with protection against invasive pneumococcal disease, bacteremia, malaria and tuberculosis.</title>
        <authorList>
            <person name="Khor C.C."/>
            <person name="Chapman S.J."/>
            <person name="Vannberg F.O."/>
            <person name="Dunne A."/>
            <person name="Murphy C."/>
            <person name="Ling E.Y."/>
            <person name="Frodsham A.J."/>
            <person name="Walley A.J."/>
            <person name="Kyrieleis O."/>
            <person name="Khan A."/>
            <person name="Aucan C."/>
            <person name="Segal S."/>
            <person name="Moore C.E."/>
            <person name="Knox K."/>
            <person name="Campbell S.J."/>
            <person name="Lienhardt C."/>
            <person name="Scott A."/>
            <person name="Aaby P."/>
            <person name="Sow O.Y."/>
            <person name="Grignani R.T."/>
            <person name="Sillah J."/>
            <person name="Sirugo G."/>
            <person name="Peshu N."/>
            <person name="Williams T.N."/>
            <person name="Maitland K."/>
            <person name="Davies R.J.O."/>
            <person name="Kwiatkowski D.P."/>
            <person name="Day N.P."/>
            <person name="Yala D."/>
            <person name="Crook D.W."/>
            <person name="Marsh K."/>
            <person name="Berkley J.A."/>
            <person name="O'Neill L.A.J."/>
            <person name="Hill A.V.S."/>
        </authorList>
    </citation>
    <scope>INTERACTION WITH TIRAP</scope>
</reference>
<reference key="18">
    <citation type="journal article" date="2009" name="Cell. Immunol.">
        <title>TLR2 and its co-receptors determine responses of macrophages and dendritic cells to lipoproteins of Mycobacterium tuberculosis.</title>
        <authorList>
            <person name="Drage M.G."/>
            <person name="Pecora N.D."/>
            <person name="Hise A.G."/>
            <person name="Febbraio M."/>
            <person name="Silverstein R.L."/>
            <person name="Golenbock D.T."/>
            <person name="Boom W.H."/>
            <person name="Harding C.V."/>
        </authorList>
    </citation>
    <scope>FUNCTION</scope>
</reference>
<reference key="19">
    <citation type="journal article" date="2010" name="Biochem. Biophys. Res. Commun.">
        <title>Non-acylated Mycobacterium bovis glycoprotein MPB83 binds to TLR1/2 and stimulates production of matrix metalloproteinase 9.</title>
        <authorList>
            <person name="Chambers M.A."/>
            <person name="Whelan A.O."/>
            <person name="Spallek R."/>
            <person name="Singh M."/>
            <person name="Coddeville B."/>
            <person name="Guerardel Y."/>
            <person name="Elass E."/>
        </authorList>
    </citation>
    <scope>FUNCTION</scope>
    <scope>INTERACTION WITH M.BOVIS MPB83 AND M.TUBERCULOSIS ESXA (MICROBIAL INFECTION)</scope>
</reference>
<reference key="20">
    <citation type="journal article" date="2011" name="Infect. Immun.">
        <title>Mycobacterium tuberculosis lipoproteins directly regulate human memory CD4(+) T cell activation via Toll-like receptors 1 and 2.</title>
        <authorList>
            <person name="Lancioni C.L."/>
            <person name="Li Q."/>
            <person name="Thomas J.J."/>
            <person name="Ding X."/>
            <person name="Thiel B."/>
            <person name="Drage M.G."/>
            <person name="Pecora N.D."/>
            <person name="Ziady A.G."/>
            <person name="Shank S."/>
            <person name="Harding C.V."/>
            <person name="Boom W.H."/>
            <person name="Rojas R.E."/>
        </authorList>
    </citation>
    <scope>FUNCTION</scope>
    <source>
        <tissue>T-cell</tissue>
    </source>
</reference>
<reference key="21">
    <citation type="journal article" date="2012" name="Infect. Immun.">
        <title>Staphylococcal superantigen-like protein 3 binds to the Toll-like receptor 2 extracellular domain and inhibits cytokine production induced by Staphylococcus aureus, cell wall component, or lipopeptides in murine macrophages.</title>
        <authorList>
            <person name="Yokoyama R."/>
            <person name="Itoh S."/>
            <person name="Kamoshida G."/>
            <person name="Takii T."/>
            <person name="Fujii S."/>
            <person name="Tsuji T."/>
            <person name="Onozaki K."/>
        </authorList>
    </citation>
    <scope>INTERACTION WITH STAPHYLOCOCCUS AUREUS SUPERANTIGEN-LIKE PROTEIN 3 (MICROBIAL INFECTION)</scope>
</reference>
<reference key="22">
    <citation type="journal article" date="2013" name="EMBO J.">
        <title>TMEM59 defines a novel ATG16L1-binding motif that promotes local activation of LC3.</title>
        <authorList>
            <person name="Boada-Romero E."/>
            <person name="Letek M."/>
            <person name="Fleischer A."/>
            <person name="Pallauf K."/>
            <person name="Ramon-Barros C."/>
            <person name="Pimentel-Muinos F.X."/>
        </authorList>
    </citation>
    <scope>INTERACTION WITH ATG16L1</scope>
</reference>
<reference key="23">
    <citation type="journal article" date="2014" name="J. Immunol.">
        <title>TRAM is required for TLR2 endosomal signaling to type I IFN induction.</title>
        <authorList>
            <person name="Stack J."/>
            <person name="Doyle S.L."/>
            <person name="Connolly D.J."/>
            <person name="Reinert L.S."/>
            <person name="O'Keeffe K.M."/>
            <person name="McLoughlin R.M."/>
            <person name="Paludan S.R."/>
            <person name="Bowie A.G."/>
        </authorList>
    </citation>
    <scope>INTERACTION WITH TICAM2</scope>
</reference>
<reference key="24">
    <citation type="journal article" date="2016" name="Elife">
        <title>RING finger E3 ligase PPP1R11 regulates TLR2 signaling and innate immunity.</title>
        <authorList>
            <person name="McKelvey A.C."/>
            <person name="Lear T.B."/>
            <person name="Dunn S.R."/>
            <person name="Evankovich J."/>
            <person name="Londino J.D."/>
            <person name="Bednash J.S."/>
            <person name="Zhang Y."/>
            <person name="McVerry B.J."/>
            <person name="Liu Y."/>
            <person name="Chen B.B."/>
        </authorList>
    </citation>
    <scope>UBIQUITINATION AT LYS-754</scope>
    <scope>MUTAGENESIS OF LYS-709; LYS-714; 742-LYS--LYS-743; LYS-751 AND LYS-754</scope>
</reference>
<reference key="25">
    <citation type="journal article" date="2021" name="EMBO Mol. Med.">
        <title>Long-lived macrophage reprogramming drives spike protein-mediated inflammasome activation in COVID-19.</title>
        <authorList>
            <person name="Theobald S.J."/>
            <person name="Simonis A."/>
            <person name="Georgomanolis T."/>
            <person name="Kreer C."/>
            <person name="Zehner M."/>
            <person name="Eisfeld H.S."/>
            <person name="Albert M.C."/>
            <person name="Chhen J."/>
            <person name="Motameny S."/>
            <person name="Erger F."/>
            <person name="Fischer J."/>
            <person name="Malin J.J."/>
            <person name="Graeb J."/>
            <person name="Winter S."/>
            <person name="Pouikli A."/>
            <person name="David F."/>
            <person name="Boell B."/>
            <person name="Koehler P."/>
            <person name="Vanshylla K."/>
            <person name="Gruell H."/>
            <person name="Suarez I."/>
            <person name="Hallek M."/>
            <person name="Faetkenheuer G."/>
            <person name="Jung N."/>
            <person name="Cornely O.A."/>
            <person name="Lehmann C."/>
            <person name="Tessarz P."/>
            <person name="Altmueller J."/>
            <person name="Nuernberg P."/>
            <person name="Kashkar H."/>
            <person name="Klein F."/>
            <person name="Koch M."/>
            <person name="Rybniker J."/>
        </authorList>
    </citation>
    <scope>INDUCTION BY SARS-COV-2 INFECTION</scope>
</reference>
<reference key="26">
    <citation type="journal article" date="2000" name="Nature">
        <title>Structural basis for signal transduction by the Toll/interleukin-1 receptor domains.</title>
        <authorList>
            <person name="Xu Y."/>
            <person name="Tao X."/>
            <person name="Shen B."/>
            <person name="Horng T."/>
            <person name="Medzhitov R."/>
            <person name="Manley J.L."/>
            <person name="Tong L."/>
        </authorList>
    </citation>
    <scope>X-RAY CRYSTALLOGRAPHY (2.8 ANGSTROMS) OF 639-784</scope>
    <scope>MUTAGENESIS</scope>
</reference>
<reference key="27">
    <citation type="journal article" date="2007" name="Cell">
        <title>Crystal structure of the TLR1-TLR2 heterodimer induced by binding of a tri-acylated lipopeptide.</title>
        <authorList>
            <person name="Jin M.S."/>
            <person name="Kim S.E."/>
            <person name="Heo J.Y."/>
            <person name="Lee M.E."/>
            <person name="Kim H.M."/>
            <person name="Paik S.-G."/>
            <person name="Lee H."/>
            <person name="Lee J.-O."/>
        </authorList>
    </citation>
    <scope>X-RAY CRYSTALLOGRAPHY (1.8 ANGSTROMS) OF 1-509 IN COMPLEX WITH TLR1 AND BACTERIAL LIPOPEPTIDE ANALOG</scope>
    <scope>DISULFIDE BONDS</scope>
    <scope>GLYCOSYLATION AT ASN-114; ASN-199; ASN-414 AND ASN-442</scope>
    <scope>FUNCTION</scope>
</reference>
<reference key="28">
    <citation type="journal article" date="2001" name="FEMS Immunol. Med. Microbiol.">
        <title>Detection of Toll-like receptor 2 (TLR2) mutation in the lepromatous leprosy patients.</title>
        <authorList>
            <person name="Kang T.-J."/>
            <person name="Chae G.-T."/>
        </authorList>
    </citation>
    <scope>VARIANT TRP-677</scope>
    <scope>ASSOCIATION WITH LEPROSIS</scope>
</reference>
<reference key="29">
    <citation type="journal article" date="2003" name="J. Immunol.">
        <title>A Toll-like receptor 2 polymorphism that is associated with lepromatous leprosy is unable to mediate mycobacterial signaling.</title>
        <authorList>
            <person name="Bochud P.-Y."/>
            <person name="Hawn T.R."/>
            <person name="Aderem A."/>
        </authorList>
    </citation>
    <scope>VARIANT TRP-677</scope>
    <scope>ASSOCIATION WITH LEPROSIS</scope>
</reference>
<reference key="30">
    <citation type="journal article" date="2011" name="Hum. Mutat.">
        <title>Functional characterization of naturally occurring genetic variants in the human TLR1-2-6 gene family.</title>
        <authorList>
            <person name="Ben-Ali M."/>
            <person name="Corre B."/>
            <person name="Manry J."/>
            <person name="Barreiro L.B."/>
            <person name="Quach H."/>
            <person name="Boniotto M."/>
            <person name="Pellegrini S."/>
            <person name="Quintana-Murci L."/>
        </authorList>
    </citation>
    <scope>VARIANTS ASP-89; ILE-411; HIS-571; HIS-631; ARG-636 AND GLN-753</scope>
    <scope>CHARACTERIZATION OF VARIANTS ILE-411; HIS-631 AND GLN-753</scope>
</reference>
<feature type="signal peptide" evidence="4">
    <location>
        <begin position="1"/>
        <end position="20"/>
    </location>
</feature>
<feature type="chain" id="PRO_0000034710" description="Toll-like receptor 2">
    <location>
        <begin position="21"/>
        <end position="784"/>
    </location>
</feature>
<feature type="topological domain" description="Extracellular" evidence="4">
    <location>
        <begin position="21"/>
        <end position="588"/>
    </location>
</feature>
<feature type="transmembrane region" description="Helical" evidence="4">
    <location>
        <begin position="589"/>
        <end position="609"/>
    </location>
</feature>
<feature type="topological domain" description="Cytoplasmic" evidence="4">
    <location>
        <begin position="610"/>
        <end position="784"/>
    </location>
</feature>
<feature type="repeat" description="LRR 1">
    <location>
        <begin position="54"/>
        <end position="77"/>
    </location>
</feature>
<feature type="repeat" description="LRR 2">
    <location>
        <begin position="78"/>
        <end position="101"/>
    </location>
</feature>
<feature type="repeat" description="LRR 3">
    <location>
        <begin position="102"/>
        <end position="125"/>
    </location>
</feature>
<feature type="repeat" description="LRR 4">
    <location>
        <begin position="126"/>
        <end position="150"/>
    </location>
</feature>
<feature type="repeat" description="LRR 5">
    <location>
        <begin position="151"/>
        <end position="175"/>
    </location>
</feature>
<feature type="repeat" description="LRR 6">
    <location>
        <begin position="176"/>
        <end position="199"/>
    </location>
</feature>
<feature type="repeat" description="LRR 7">
    <location>
        <begin position="200"/>
        <end position="223"/>
    </location>
</feature>
<feature type="repeat" description="LRR 8">
    <location>
        <begin position="224"/>
        <end position="250"/>
    </location>
</feature>
<feature type="repeat" description="LRR 9">
    <location>
        <begin position="251"/>
        <end position="278"/>
    </location>
</feature>
<feature type="repeat" description="LRR 10">
    <location>
        <begin position="279"/>
        <end position="308"/>
    </location>
</feature>
<feature type="repeat" description="LRR 11">
    <location>
        <begin position="309"/>
        <end position="337"/>
    </location>
</feature>
<feature type="repeat" description="LRR 12">
    <location>
        <begin position="338"/>
        <end position="361"/>
    </location>
</feature>
<feature type="repeat" description="LRR 13">
    <location>
        <begin position="362"/>
        <end position="388"/>
    </location>
</feature>
<feature type="repeat" description="LRR 14">
    <location>
        <begin position="389"/>
        <end position="414"/>
    </location>
</feature>
<feature type="repeat" description="LRR 15">
    <location>
        <begin position="415"/>
        <end position="437"/>
    </location>
</feature>
<feature type="repeat" description="LRR 16">
    <location>
        <begin position="438"/>
        <end position="457"/>
    </location>
</feature>
<feature type="repeat" description="LRR 17">
    <location>
        <begin position="458"/>
        <end position="478"/>
    </location>
</feature>
<feature type="repeat" description="LRR 18">
    <location>
        <begin position="479"/>
        <end position="500"/>
    </location>
</feature>
<feature type="repeat" description="LRR 19">
    <location>
        <begin position="501"/>
        <end position="524"/>
    </location>
</feature>
<feature type="domain" description="LRRCT">
    <location>
        <begin position="525"/>
        <end position="579"/>
    </location>
</feature>
<feature type="domain" description="TIR" evidence="5">
    <location>
        <begin position="639"/>
        <end position="782"/>
    </location>
</feature>
<feature type="short sequence motif" description="ATG16L1-binding motif">
    <location>
        <begin position="761"/>
        <end position="778"/>
    </location>
</feature>
<feature type="site" description="Interaction with bacterial lipopeptide">
    <location>
        <position position="349"/>
    </location>
</feature>
<feature type="glycosylation site" description="N-linked (GlcNAc...) asparagine" evidence="13 18">
    <location>
        <position position="114"/>
    </location>
</feature>
<feature type="glycosylation site" description="N-linked (GlcNAc...) asparagine" evidence="13 18">
    <location>
        <position position="199"/>
    </location>
</feature>
<feature type="glycosylation site" description="N-linked (GlcNAc...) asparagine" evidence="18">
    <location>
        <position position="414"/>
    </location>
</feature>
<feature type="glycosylation site" description="N-linked (GlcNAc...) asparagine" evidence="13 18">
    <location>
        <position position="442"/>
    </location>
</feature>
<feature type="disulfide bond" evidence="18">
    <location>
        <begin position="30"/>
        <end position="36"/>
    </location>
</feature>
<feature type="disulfide bond" evidence="18">
    <location>
        <begin position="353"/>
        <end position="382"/>
    </location>
</feature>
<feature type="disulfide bond" evidence="18">
    <location>
        <begin position="432"/>
        <end position="454"/>
    </location>
</feature>
<feature type="cross-link" description="Glycyl lysine isopeptide (Lys-Gly) (interchain with G-Cter in ubiquitin)" evidence="27">
    <location>
        <position position="754"/>
    </location>
</feature>
<feature type="sequence variant" id="VAR_066349" description="In dbSNP:rs137853176." evidence="23">
    <original>N</original>
    <variation>D</variation>
    <location>
        <position position="89"/>
    </location>
</feature>
<feature type="sequence variant" id="VAR_026765" description="Reduces TLR2-mediated NF-kappa-B activation; dbSNP:rs5743699." evidence="23">
    <original>T</original>
    <variation>I</variation>
    <location>
        <position position="411"/>
    </location>
</feature>
<feature type="sequence variant" id="VAR_066350" description="In dbSNP:rs61735277." evidence="23">
    <original>R</original>
    <variation>H</variation>
    <location>
        <position position="571"/>
    </location>
</feature>
<feature type="sequence variant" id="VAR_026766" description="In dbSNP:rs5743703.">
    <original>R</original>
    <variation>H</variation>
    <location>
        <position position="579"/>
    </location>
</feature>
<feature type="sequence variant" id="VAR_024663" description="Reduces TLR2-mediated NF-kappa-B activation; dbSNP:rs5743704." evidence="20 23">
    <original>P</original>
    <variation>H</variation>
    <location>
        <position position="631"/>
    </location>
</feature>
<feature type="sequence variant" id="VAR_066351" description="In dbSNP:rs137853177." evidence="23">
    <original>S</original>
    <variation>R</variation>
    <location>
        <position position="636"/>
    </location>
</feature>
<feature type="sequence variant" id="VAR_031236" description="In dbSNP:rs121917864." evidence="10 12">
    <original>R</original>
    <variation>W</variation>
    <location>
        <position position="677"/>
    </location>
</feature>
<feature type="sequence variant" id="VAR_052360" description="In dbSNP:rs5743706.">
    <original>Y</original>
    <variation>N</variation>
    <location>
        <position position="715"/>
    </location>
</feature>
<feature type="sequence variant" id="VAR_031237" description="Reduces TLR2-mediated NF-kappa-B activation; dbSNP:rs5743708." evidence="20 23">
    <original>R</original>
    <variation>Q</variation>
    <location>
        <position position="753"/>
    </location>
</feature>
<feature type="mutagenesis site" description="Prevents addition of N-glycans. Reduces secretion of the N-terminal ectodomain." evidence="13">
    <original>N</original>
    <variation>S</variation>
    <location>
        <position position="114"/>
    </location>
</feature>
<feature type="mutagenesis site" description="Prevents addition of N-glycans. Reduces secretion of the N-terminal ectodomain." evidence="13">
    <original>N</original>
    <variation>D</variation>
    <location>
        <position position="199"/>
    </location>
</feature>
<feature type="mutagenesis site" description="Prevents addition of N-glycans. Reduces secretion of the N-terminal ectodomain." evidence="13">
    <original>T</original>
    <variation>A</variation>
    <location>
        <position position="416"/>
    </location>
</feature>
<feature type="mutagenesis site" description="Prevents addition of N-glycans. Prevents secretion of the N-terminal ectodomain." evidence="13">
    <original>N</original>
    <variation>D</variation>
    <location>
        <position position="442"/>
    </location>
</feature>
<feature type="mutagenesis site" description="Abolishes the interaction with MYD88. No effect on oligomerization or on the structure of the TIR domain." evidence="8">
    <original>P</original>
    <variation>F</variation>
    <location>
        <position position="681"/>
    </location>
</feature>
<feature type="mutagenesis site" description="Reduced protein stability." evidence="27">
    <original>K</original>
    <variation>R</variation>
    <location>
        <position position="709"/>
    </location>
</feature>
<feature type="mutagenesis site" description="Reduced protein stability." evidence="27">
    <original>K</original>
    <variation>R</variation>
    <location>
        <position position="714"/>
    </location>
</feature>
<feature type="mutagenesis site" description="Reduced protein stability." evidence="27">
    <original>KK</original>
    <variation>RR</variation>
    <location>
        <begin position="742"/>
        <end position="743"/>
    </location>
</feature>
<feature type="mutagenesis site" description="Reduced protein stability." evidence="27">
    <original>K</original>
    <variation>R</variation>
    <location>
        <position position="751"/>
    </location>
</feature>
<feature type="mutagenesis site" description="Loss of PPP1R11-mediated ubiquitination and degradation." evidence="27">
    <original>K</original>
    <variation>R</variation>
    <location>
        <position position="754"/>
    </location>
</feature>
<feature type="sequence conflict" description="In Ref. 8; AAM23001." evidence="29" ref="8">
    <original>L</original>
    <variation>Q</variation>
    <location>
        <position position="59"/>
    </location>
</feature>
<feature type="sequence conflict" description="In Ref. 8; AAM23001." evidence="29" ref="8">
    <original>S</original>
    <variation>C</variation>
    <location>
        <position position="68"/>
    </location>
</feature>
<feature type="sequence conflict" description="In Ref. 2; AAC34133." evidence="29" ref="2">
    <original>D</original>
    <variation>E</variation>
    <location>
        <position position="726"/>
    </location>
</feature>
<feature type="strand" evidence="35">
    <location>
        <begin position="34"/>
        <end position="37"/>
    </location>
</feature>
<feature type="strand" evidence="35">
    <location>
        <begin position="56"/>
        <end position="58"/>
    </location>
</feature>
<feature type="turn" evidence="35">
    <location>
        <begin position="69"/>
        <end position="74"/>
    </location>
</feature>
<feature type="strand" evidence="35">
    <location>
        <begin position="80"/>
        <end position="82"/>
    </location>
</feature>
<feature type="turn" evidence="35">
    <location>
        <begin position="93"/>
        <end position="98"/>
    </location>
</feature>
<feature type="strand" evidence="35">
    <location>
        <begin position="104"/>
        <end position="106"/>
    </location>
</feature>
<feature type="helix" evidence="35">
    <location>
        <begin position="117"/>
        <end position="120"/>
    </location>
</feature>
<feature type="strand" evidence="35">
    <location>
        <begin position="127"/>
        <end position="130"/>
    </location>
</feature>
<feature type="strand" evidence="35">
    <location>
        <begin position="137"/>
        <end position="139"/>
    </location>
</feature>
<feature type="strand" evidence="35">
    <location>
        <begin position="153"/>
        <end position="161"/>
    </location>
</feature>
<feature type="turn" evidence="35">
    <location>
        <begin position="167"/>
        <end position="172"/>
    </location>
</feature>
<feature type="strand" evidence="35">
    <location>
        <begin position="175"/>
        <end position="183"/>
    </location>
</feature>
<feature type="turn" evidence="35">
    <location>
        <begin position="191"/>
        <end position="196"/>
    </location>
</feature>
<feature type="strand" evidence="35">
    <location>
        <begin position="198"/>
        <end position="206"/>
    </location>
</feature>
<feature type="strand" evidence="36">
    <location>
        <begin position="208"/>
        <end position="210"/>
    </location>
</feature>
<feature type="helix" evidence="35">
    <location>
        <begin position="213"/>
        <end position="220"/>
    </location>
</feature>
<feature type="turn" evidence="35">
    <location>
        <begin position="221"/>
        <end position="223"/>
    </location>
</feature>
<feature type="strand" evidence="35">
    <location>
        <begin position="224"/>
        <end position="231"/>
    </location>
</feature>
<feature type="strand" evidence="35">
    <location>
        <begin position="253"/>
        <end position="258"/>
    </location>
</feature>
<feature type="strand" evidence="34">
    <location>
        <begin position="260"/>
        <end position="262"/>
    </location>
</feature>
<feature type="helix" evidence="35">
    <location>
        <begin position="263"/>
        <end position="274"/>
    </location>
</feature>
<feature type="strand" evidence="35">
    <location>
        <begin position="281"/>
        <end position="283"/>
    </location>
</feature>
<feature type="strand" evidence="34">
    <location>
        <begin position="288"/>
        <end position="291"/>
    </location>
</feature>
<feature type="turn" evidence="36">
    <location>
        <begin position="300"/>
        <end position="302"/>
    </location>
</feature>
<feature type="strand" evidence="34">
    <location>
        <begin position="311"/>
        <end position="316"/>
    </location>
</feature>
<feature type="helix" evidence="34">
    <location>
        <begin position="322"/>
        <end position="324"/>
    </location>
</feature>
<feature type="helix" evidence="34">
    <location>
        <begin position="329"/>
        <end position="334"/>
    </location>
</feature>
<feature type="strand" evidence="34">
    <location>
        <begin position="340"/>
        <end position="346"/>
    </location>
</feature>
<feature type="helix" evidence="34">
    <location>
        <begin position="353"/>
        <end position="358"/>
    </location>
</feature>
<feature type="strand" evidence="34">
    <location>
        <begin position="364"/>
        <end position="366"/>
    </location>
</feature>
<feature type="helix" evidence="34">
    <location>
        <begin position="374"/>
        <end position="380"/>
    </location>
</feature>
<feature type="strand" evidence="34">
    <location>
        <begin position="391"/>
        <end position="393"/>
    </location>
</feature>
<feature type="helix" evidence="34">
    <location>
        <begin position="402"/>
        <end position="408"/>
    </location>
</feature>
<feature type="helix" evidence="34">
    <location>
        <begin position="409"/>
        <end position="411"/>
    </location>
</feature>
<feature type="strand" evidence="34">
    <location>
        <begin position="417"/>
        <end position="419"/>
    </location>
</feature>
<feature type="strand" evidence="34">
    <location>
        <begin position="440"/>
        <end position="442"/>
    </location>
</feature>
<feature type="strand" evidence="34">
    <location>
        <begin position="460"/>
        <end position="463"/>
    </location>
</feature>
<feature type="strand" evidence="34">
    <location>
        <begin position="481"/>
        <end position="483"/>
    </location>
</feature>
<feature type="helix" evidence="34">
    <location>
        <begin position="495"/>
        <end position="497"/>
    </location>
</feature>
<feature type="strand" evidence="34">
    <location>
        <begin position="503"/>
        <end position="505"/>
    </location>
</feature>
<feature type="helix" evidence="34">
    <location>
        <begin position="518"/>
        <end position="520"/>
    </location>
</feature>
<feature type="strand" evidence="34">
    <location>
        <begin position="527"/>
        <end position="529"/>
    </location>
</feature>
<feature type="helix" evidence="34">
    <location>
        <begin position="539"/>
        <end position="544"/>
    </location>
</feature>
<feature type="turn" evidence="34">
    <location>
        <begin position="545"/>
        <end position="547"/>
    </location>
</feature>
<feature type="strand" evidence="34">
    <location>
        <begin position="548"/>
        <end position="550"/>
    </location>
</feature>
<feature type="helix" evidence="37">
    <location>
        <begin position="586"/>
        <end position="611"/>
    </location>
</feature>
<feature type="helix" evidence="37">
    <location>
        <begin position="613"/>
        <end position="627"/>
    </location>
</feature>
<feature type="strand" evidence="32">
    <location>
        <begin position="641"/>
        <end position="646"/>
    </location>
</feature>
<feature type="helix" evidence="32">
    <location>
        <begin position="649"/>
        <end position="651"/>
    </location>
</feature>
<feature type="helix" evidence="32">
    <location>
        <begin position="652"/>
        <end position="656"/>
    </location>
</feature>
<feature type="helix" evidence="32">
    <location>
        <begin position="658"/>
        <end position="663"/>
    </location>
</feature>
<feature type="strand" evidence="32">
    <location>
        <begin position="666"/>
        <end position="668"/>
    </location>
</feature>
<feature type="strand" evidence="32">
    <location>
        <begin position="672"/>
        <end position="674"/>
    </location>
</feature>
<feature type="helix" evidence="32">
    <location>
        <begin position="675"/>
        <end position="678"/>
    </location>
</feature>
<feature type="strand" evidence="32">
    <location>
        <begin position="681"/>
        <end position="683"/>
    </location>
</feature>
<feature type="helix" evidence="32">
    <location>
        <begin position="685"/>
        <end position="695"/>
    </location>
</feature>
<feature type="strand" evidence="32">
    <location>
        <begin position="696"/>
        <end position="703"/>
    </location>
</feature>
<feature type="helix" evidence="32">
    <location>
        <begin position="705"/>
        <end position="711"/>
    </location>
</feature>
<feature type="helix" evidence="32">
    <location>
        <begin position="713"/>
        <end position="716"/>
    </location>
</feature>
<feature type="turn" evidence="33">
    <location>
        <begin position="717"/>
        <end position="719"/>
    </location>
</feature>
<feature type="helix" evidence="33">
    <location>
        <begin position="720"/>
        <end position="722"/>
    </location>
</feature>
<feature type="turn" evidence="31">
    <location>
        <begin position="723"/>
        <end position="725"/>
    </location>
</feature>
<feature type="helix" evidence="32">
    <location>
        <begin position="726"/>
        <end position="728"/>
    </location>
</feature>
<feature type="strand" evidence="32">
    <location>
        <begin position="733"/>
        <end position="738"/>
    </location>
</feature>
<feature type="turn" evidence="32">
    <location>
        <begin position="742"/>
        <end position="744"/>
    </location>
</feature>
<feature type="helix" evidence="32">
    <location>
        <begin position="750"/>
        <end position="758"/>
    </location>
</feature>
<feature type="strand" evidence="32">
    <location>
        <begin position="761"/>
        <end position="763"/>
    </location>
</feature>
<feature type="helix" evidence="32">
    <location>
        <begin position="768"/>
        <end position="770"/>
    </location>
</feature>
<feature type="helix" evidence="32">
    <location>
        <begin position="771"/>
        <end position="783"/>
    </location>
</feature>
<proteinExistence type="evidence at protein level"/>
<sequence>MPHTLWMVWVLGVIISLSKEESSNQASLSCDRNGICKGSSGSLNSIPSGLTEAVKSLDLSNNRITYISNSDLQRCVNLQALVLTSNGINTIEEDSFSSLGSLEHLDLSYNYLSNLSSSWFKPLSSLTFLNLLGNPYKTLGETSLFSHLTKLQILRVGNMDTFTKIQRKDFAGLTFLEELEIDASDLQSYEPKSLKSIQNVSHLILHMKQHILLLEIFVDVTSSVECLELRDTDLDTFHFSELSTGETNSLIKKFTFRNVKITDESLFQVMKLLNQISGLLELEFDDCTLNGVGNFRASDNDRVIDPGKVETLTIRRLHIPRFYLFYDLSTLYSLTERVKRITVENSKVFLVPCLLSQHLKSLEYLDLSENLMVEEYLKNSACEDAWPSLQTLILRQNHLASLEKTGETLLTLKNLTNIDISKNSFHSMPETCQWPEKMKYLNLSSTRIHSVTGCIPKTLEILDVSNNNLNLFSLNLPQLKELYISRNKLMTLPDASLLPMLLVLKISRNAITTFSKEQLDSFHTLKTLEAGGNNFICSCEFLSFTQEQQALAKVLIDWPANYLCDSPSHVRGQQVQDVRLSVSECHRTALVSGMCCALFLLILLTGVLCHRFHGLWYMKMMWAWLQAKRKPRKAPSRNICYDAFVSYSERDAYWVENLMVQELENFNPPFKLCLHKRDFIPGKWIIDNIIDSIEKSHKTVFVLSENFVKSEWCKYELDFSHFRLFDENNDAAILILLEPIEKKAIPQRFCKLRKIMNTKTYLEWPMDEAQREGFWVNLRAAIKS</sequence>
<dbReference type="EMBL" id="AF051152">
    <property type="protein sequence ID" value="AAC34377.1"/>
    <property type="molecule type" value="mRNA"/>
</dbReference>
<dbReference type="EMBL" id="U88878">
    <property type="protein sequence ID" value="AAC34133.1"/>
    <property type="molecule type" value="mRNA"/>
</dbReference>
<dbReference type="EMBL" id="AB445624">
    <property type="protein sequence ID" value="BAG55021.1"/>
    <property type="molecule type" value="mRNA"/>
</dbReference>
<dbReference type="EMBL" id="DQ012265">
    <property type="protein sequence ID" value="AAY85644.1"/>
    <property type="molecule type" value="mRNA"/>
</dbReference>
<dbReference type="EMBL" id="DQ012266">
    <property type="protein sequence ID" value="AAY85645.1"/>
    <property type="molecule type" value="mRNA"/>
</dbReference>
<dbReference type="EMBL" id="DQ012267">
    <property type="protein sequence ID" value="AAY85646.1"/>
    <property type="molecule type" value="mRNA"/>
</dbReference>
<dbReference type="EMBL" id="DQ012268">
    <property type="protein sequence ID" value="AAY85647.1"/>
    <property type="molecule type" value="mRNA"/>
</dbReference>
<dbReference type="EMBL" id="DQ012269">
    <property type="protein sequence ID" value="AAY85648.1"/>
    <property type="molecule type" value="mRNA"/>
</dbReference>
<dbReference type="EMBL" id="DQ012270">
    <property type="protein sequence ID" value="AAY85649.1"/>
    <property type="molecule type" value="mRNA"/>
</dbReference>
<dbReference type="EMBL" id="DQ012271">
    <property type="protein sequence ID" value="AAY85650.1"/>
    <property type="molecule type" value="mRNA"/>
</dbReference>
<dbReference type="EMBL" id="CH471056">
    <property type="protein sequence ID" value="EAX04952.1"/>
    <property type="molecule type" value="Genomic_DNA"/>
</dbReference>
<dbReference type="EMBL" id="CH471056">
    <property type="protein sequence ID" value="EAX04953.1"/>
    <property type="molecule type" value="Genomic_DNA"/>
</dbReference>
<dbReference type="EMBL" id="BC033756">
    <property type="protein sequence ID" value="AAH33756.1"/>
    <property type="molecule type" value="mRNA"/>
</dbReference>
<dbReference type="EMBL" id="AF502291">
    <property type="protein sequence ID" value="AAM23001.1"/>
    <property type="molecule type" value="mRNA"/>
</dbReference>
<dbReference type="CCDS" id="CCDS3784.1"/>
<dbReference type="RefSeq" id="NP_001305716.1">
    <property type="nucleotide sequence ID" value="NM_001318787.2"/>
</dbReference>
<dbReference type="RefSeq" id="NP_001305718.1">
    <property type="nucleotide sequence ID" value="NM_001318789.2"/>
</dbReference>
<dbReference type="RefSeq" id="NP_001305719.1">
    <property type="nucleotide sequence ID" value="NM_001318790.2"/>
</dbReference>
<dbReference type="RefSeq" id="NP_001305720.1">
    <property type="nucleotide sequence ID" value="NM_001318791.2"/>
</dbReference>
<dbReference type="RefSeq" id="NP_001305722.1">
    <property type="nucleotide sequence ID" value="NM_001318793.2"/>
</dbReference>
<dbReference type="RefSeq" id="NP_001305724.1">
    <property type="nucleotide sequence ID" value="NM_001318795.2"/>
</dbReference>
<dbReference type="RefSeq" id="NP_001305725.1">
    <property type="nucleotide sequence ID" value="NM_001318796.2"/>
</dbReference>
<dbReference type="RefSeq" id="NP_003255.2">
    <property type="nucleotide sequence ID" value="NM_003264.4"/>
</dbReference>
<dbReference type="RefSeq" id="XP_011530517.1">
    <property type="nucleotide sequence ID" value="XM_011532215.3"/>
</dbReference>
<dbReference type="RefSeq" id="XP_011530518.1">
    <property type="nucleotide sequence ID" value="XM_011532216.3"/>
</dbReference>
<dbReference type="RefSeq" id="XP_016864062.1">
    <property type="nucleotide sequence ID" value="XM_017008573.2"/>
</dbReference>
<dbReference type="RefSeq" id="XP_016864063.1">
    <property type="nucleotide sequence ID" value="XM_017008574.1"/>
</dbReference>
<dbReference type="RefSeq" id="XP_016864064.1">
    <property type="nucleotide sequence ID" value="XM_017008575.2"/>
</dbReference>
<dbReference type="RefSeq" id="XP_016864065.1">
    <property type="nucleotide sequence ID" value="XM_017008576.1"/>
</dbReference>
<dbReference type="RefSeq" id="XP_047272067.1">
    <property type="nucleotide sequence ID" value="XM_047416111.1"/>
</dbReference>
<dbReference type="RefSeq" id="XP_047272068.1">
    <property type="nucleotide sequence ID" value="XM_047416112.1"/>
</dbReference>
<dbReference type="RefSeq" id="XP_047272069.1">
    <property type="nucleotide sequence ID" value="XM_047416113.1"/>
</dbReference>
<dbReference type="RefSeq" id="XP_047272070.1">
    <property type="nucleotide sequence ID" value="XM_047416114.1"/>
</dbReference>
<dbReference type="PDB" id="1FYW">
    <property type="method" value="X-ray"/>
    <property type="resolution" value="3.00 A"/>
    <property type="chains" value="A=636-784"/>
</dbReference>
<dbReference type="PDB" id="1FYX">
    <property type="method" value="X-ray"/>
    <property type="resolution" value="2.80 A"/>
    <property type="chains" value="A=636-784"/>
</dbReference>
<dbReference type="PDB" id="1O77">
    <property type="method" value="X-ray"/>
    <property type="resolution" value="3.20 A"/>
    <property type="chains" value="A/B/C/D/E=639-784"/>
</dbReference>
<dbReference type="PDB" id="2Z7X">
    <property type="method" value="X-ray"/>
    <property type="resolution" value="2.10 A"/>
    <property type="chains" value="A=27-506"/>
</dbReference>
<dbReference type="PDB" id="2Z80">
    <property type="method" value="X-ray"/>
    <property type="resolution" value="1.80 A"/>
    <property type="chains" value="A/B=1-284"/>
</dbReference>
<dbReference type="PDB" id="6NIG">
    <property type="method" value="X-ray"/>
    <property type="resolution" value="2.35 A"/>
    <property type="chains" value="A/B/C/D=1-507"/>
</dbReference>
<dbReference type="PDB" id="8AR0">
    <property type="method" value="NMR"/>
    <property type="chains" value="A=580-629"/>
</dbReference>
<dbReference type="PDBsum" id="1FYW"/>
<dbReference type="PDBsum" id="1FYX"/>
<dbReference type="PDBsum" id="1O77"/>
<dbReference type="PDBsum" id="2Z7X"/>
<dbReference type="PDBsum" id="2Z80"/>
<dbReference type="PDBsum" id="6NIG"/>
<dbReference type="PDBsum" id="8AR0"/>
<dbReference type="SMR" id="O60603"/>
<dbReference type="BioGRID" id="112952">
    <property type="interactions" value="43"/>
</dbReference>
<dbReference type="ComplexPortal" id="CPX-2524">
    <property type="entry name" value="TLR2-TLR10 toll-like receptor complex"/>
</dbReference>
<dbReference type="ComplexPortal" id="CPX-892">
    <property type="entry name" value="TLR2-TLR6 toll-like receptor complex"/>
</dbReference>
<dbReference type="ComplexPortal" id="CPX-893">
    <property type="entry name" value="TLR1-TLR2 toll-like receptor complex"/>
</dbReference>
<dbReference type="CORUM" id="O60603"/>
<dbReference type="DIP" id="DIP-35138N"/>
<dbReference type="FunCoup" id="O60603">
    <property type="interactions" value="574"/>
</dbReference>
<dbReference type="IntAct" id="O60603">
    <property type="interactions" value="42"/>
</dbReference>
<dbReference type="MINT" id="O60603"/>
<dbReference type="STRING" id="9606.ENSP00000260010"/>
<dbReference type="BindingDB" id="O60603"/>
<dbReference type="ChEMBL" id="CHEMBL4163"/>
<dbReference type="DrugBank" id="DB00210">
    <property type="generic name" value="Adapalene"/>
</dbReference>
<dbReference type="DrugBank" id="DB05475">
    <property type="generic name" value="Golotimod"/>
</dbReference>
<dbReference type="DrugBank" id="DB00045">
    <property type="generic name" value="Lyme disease vaccine (recombinant OspA)"/>
</dbReference>
<dbReference type="DrugBank" id="DB16474">
    <property type="generic name" value="Pam2csk4"/>
</dbReference>
<dbReference type="DrugBank" id="DB03963">
    <property type="generic name" value="S-(Dimethylarsenic)Cysteine"/>
</dbReference>
<dbReference type="DrugBank" id="DB11601">
    <property type="generic name" value="Tuberculin purified protein derivative"/>
</dbReference>
<dbReference type="GuidetoPHARMACOLOGY" id="1752"/>
<dbReference type="TCDB" id="8.A.43.1.16">
    <property type="family name" value="the neat-domain containing methaemoglobin heme sequestration (n-mhs) family"/>
</dbReference>
<dbReference type="GlyConnect" id="1816">
    <property type="glycosylation" value="6 N-Linked glycans (2 sites)"/>
</dbReference>
<dbReference type="GlyCosmos" id="O60603">
    <property type="glycosylation" value="4 sites, 9 glycans"/>
</dbReference>
<dbReference type="GlyGen" id="O60603">
    <property type="glycosylation" value="4 sites, 16 N-linked glycans (3 sites)"/>
</dbReference>
<dbReference type="iPTMnet" id="O60603"/>
<dbReference type="PhosphoSitePlus" id="O60603"/>
<dbReference type="SwissPalm" id="O60603"/>
<dbReference type="BioMuta" id="TLR2"/>
<dbReference type="jPOST" id="O60603"/>
<dbReference type="MassIVE" id="O60603"/>
<dbReference type="PaxDb" id="9606-ENSP00000260010"/>
<dbReference type="PeptideAtlas" id="O60603"/>
<dbReference type="ProteomicsDB" id="49481"/>
<dbReference type="ABCD" id="O60603">
    <property type="antibodies" value="4 sequenced antibodies"/>
</dbReference>
<dbReference type="Antibodypedia" id="16689">
    <property type="antibodies" value="1437 antibodies from 51 providers"/>
</dbReference>
<dbReference type="DNASU" id="7097"/>
<dbReference type="Ensembl" id="ENST00000260010.7">
    <property type="protein sequence ID" value="ENSP00000260010.6"/>
    <property type="gene ID" value="ENSG00000137462.10"/>
</dbReference>
<dbReference type="Ensembl" id="ENST00000642580.1">
    <property type="protein sequence ID" value="ENSP00000495339.1"/>
    <property type="gene ID" value="ENSG00000137462.10"/>
</dbReference>
<dbReference type="Ensembl" id="ENST00000642700.2">
    <property type="protein sequence ID" value="ENSP00000494425.1"/>
    <property type="gene ID" value="ENSG00000137462.10"/>
</dbReference>
<dbReference type="Ensembl" id="ENST00000643501.2">
    <property type="protein sequence ID" value="ENSP00000496208.2"/>
    <property type="gene ID" value="ENSG00000137462.10"/>
</dbReference>
<dbReference type="Ensembl" id="ENST00000646219.2">
    <property type="protein sequence ID" value="ENSP00000496676.2"/>
    <property type="gene ID" value="ENSG00000137462.10"/>
</dbReference>
<dbReference type="Ensembl" id="ENST00000646900.2">
    <property type="protein sequence ID" value="ENSP00000493968.2"/>
    <property type="gene ID" value="ENSG00000137462.10"/>
</dbReference>
<dbReference type="Ensembl" id="ENST00000714431.1">
    <property type="protein sequence ID" value="ENSP00000519700.1"/>
    <property type="gene ID" value="ENSG00000137462.10"/>
</dbReference>
<dbReference type="Ensembl" id="ENST00000714432.1">
    <property type="protein sequence ID" value="ENSP00000519701.1"/>
    <property type="gene ID" value="ENSG00000137462.10"/>
</dbReference>
<dbReference type="Ensembl" id="ENST00000714433.1">
    <property type="protein sequence ID" value="ENSP00000519702.1"/>
    <property type="gene ID" value="ENSG00000137462.10"/>
</dbReference>
<dbReference type="Ensembl" id="ENST00000714434.1">
    <property type="protein sequence ID" value="ENSP00000519703.1"/>
    <property type="gene ID" value="ENSG00000137462.10"/>
</dbReference>
<dbReference type="Ensembl" id="ENST00000714435.1">
    <property type="protein sequence ID" value="ENSP00000519704.1"/>
    <property type="gene ID" value="ENSG00000137462.10"/>
</dbReference>
<dbReference type="GeneID" id="7097"/>
<dbReference type="KEGG" id="hsa:7097"/>
<dbReference type="MANE-Select" id="ENST00000642700.2">
    <property type="protein sequence ID" value="ENSP00000494425.1"/>
    <property type="RefSeq nucleotide sequence ID" value="NM_001318789.2"/>
    <property type="RefSeq protein sequence ID" value="NP_001305718.1"/>
</dbReference>
<dbReference type="UCSC" id="uc063aif.1">
    <property type="organism name" value="human"/>
</dbReference>
<dbReference type="AGR" id="HGNC:11848"/>
<dbReference type="CTD" id="7097"/>
<dbReference type="DisGeNET" id="7097"/>
<dbReference type="GeneCards" id="TLR2"/>
<dbReference type="HGNC" id="HGNC:11848">
    <property type="gene designation" value="TLR2"/>
</dbReference>
<dbReference type="HPA" id="ENSG00000137462">
    <property type="expression patterns" value="Tissue enhanced (bone marrow, lymphoid tissue)"/>
</dbReference>
<dbReference type="MalaCards" id="TLR2"/>
<dbReference type="MIM" id="246300">
    <property type="type" value="phenotype"/>
</dbReference>
<dbReference type="MIM" id="603028">
    <property type="type" value="gene"/>
</dbReference>
<dbReference type="neXtProt" id="NX_O60603"/>
<dbReference type="OpenTargets" id="ENSG00000137462"/>
<dbReference type="PharmGKB" id="PA36550"/>
<dbReference type="VEuPathDB" id="HostDB:ENSG00000137462"/>
<dbReference type="eggNOG" id="KOG4641">
    <property type="taxonomic scope" value="Eukaryota"/>
</dbReference>
<dbReference type="GeneTree" id="ENSGT00940000156323"/>
<dbReference type="HOGENOM" id="CLU_006000_3_0_1"/>
<dbReference type="InParanoid" id="O60603"/>
<dbReference type="OMA" id="NRDICYD"/>
<dbReference type="OrthoDB" id="1081807at2759"/>
<dbReference type="PAN-GO" id="O60603">
    <property type="GO annotations" value="5 GO annotations based on evolutionary models"/>
</dbReference>
<dbReference type="PhylomeDB" id="O60603"/>
<dbReference type="TreeFam" id="TF351113"/>
<dbReference type="PathwayCommons" id="O60603"/>
<dbReference type="Reactome" id="R-HSA-1236974">
    <property type="pathway name" value="ER-Phagosome pathway"/>
</dbReference>
<dbReference type="Reactome" id="R-HSA-1461957">
    <property type="pathway name" value="Beta defensins"/>
</dbReference>
<dbReference type="Reactome" id="R-HSA-166058">
    <property type="pathway name" value="MyD88:MAL(TIRAP) cascade initiated on plasma membrane"/>
</dbReference>
<dbReference type="Reactome" id="R-HSA-168179">
    <property type="pathway name" value="Toll Like Receptor TLR1:TLR2 Cascade"/>
</dbReference>
<dbReference type="Reactome" id="R-HSA-168188">
    <property type="pathway name" value="Toll Like Receptor TLR6:TLR2 Cascade"/>
</dbReference>
<dbReference type="Reactome" id="R-HSA-5602498">
    <property type="pathway name" value="MyD88 deficiency (TLR2/4)"/>
</dbReference>
<dbReference type="Reactome" id="R-HSA-5603041">
    <property type="pathway name" value="IRAK4 deficiency (TLR2/4)"/>
</dbReference>
<dbReference type="Reactome" id="R-HSA-5686938">
    <property type="pathway name" value="Regulation of TLR by endogenous ligand"/>
</dbReference>
<dbReference type="Reactome" id="R-HSA-6798695">
    <property type="pathway name" value="Neutrophil degranulation"/>
</dbReference>
<dbReference type="Reactome" id="R-HSA-9637628">
    <property type="pathway name" value="Modulation by Mtb of host immune system"/>
</dbReference>
<dbReference type="Reactome" id="R-HSA-9705671">
    <property type="pathway name" value="SARS-CoV-2 activates/modulates innate and adaptive immune responses"/>
</dbReference>
<dbReference type="Reactome" id="R-HSA-9833110">
    <property type="pathway name" value="RSV-host interactions"/>
</dbReference>
<dbReference type="SignaLink" id="O60603"/>
<dbReference type="SIGNOR" id="O60603"/>
<dbReference type="BioGRID-ORCS" id="7097">
    <property type="hits" value="9 hits in 1165 CRISPR screens"/>
</dbReference>
<dbReference type="EvolutionaryTrace" id="O60603"/>
<dbReference type="GeneWiki" id="TLR_2"/>
<dbReference type="GenomeRNAi" id="7097"/>
<dbReference type="Pharos" id="O60603">
    <property type="development level" value="Tchem"/>
</dbReference>
<dbReference type="PRO" id="PR:O60603"/>
<dbReference type="Proteomes" id="UP000005640">
    <property type="component" value="Chromosome 4"/>
</dbReference>
<dbReference type="RNAct" id="O60603">
    <property type="molecule type" value="protein"/>
</dbReference>
<dbReference type="Bgee" id="ENSG00000137462">
    <property type="expression patterns" value="Expressed in monocyte and 140 other cell types or tissues"/>
</dbReference>
<dbReference type="ExpressionAtlas" id="O60603">
    <property type="expression patterns" value="baseline and differential"/>
</dbReference>
<dbReference type="GO" id="GO:0009986">
    <property type="term" value="C:cell surface"/>
    <property type="evidence" value="ECO:0000314"/>
    <property type="project" value="UniProtKB"/>
</dbReference>
<dbReference type="GO" id="GO:0005737">
    <property type="term" value="C:cytoplasm"/>
    <property type="evidence" value="ECO:0000314"/>
    <property type="project" value="BHF-UCL"/>
</dbReference>
<dbReference type="GO" id="GO:0005829">
    <property type="term" value="C:cytosol"/>
    <property type="evidence" value="ECO:0000314"/>
    <property type="project" value="HPA"/>
</dbReference>
<dbReference type="GO" id="GO:0005794">
    <property type="term" value="C:Golgi apparatus"/>
    <property type="evidence" value="ECO:0000314"/>
    <property type="project" value="UniProtKB"/>
</dbReference>
<dbReference type="GO" id="GO:0043231">
    <property type="term" value="C:intracellular membrane-bounded organelle"/>
    <property type="evidence" value="ECO:0000314"/>
    <property type="project" value="HPA"/>
</dbReference>
<dbReference type="GO" id="GO:0045121">
    <property type="term" value="C:membrane raft"/>
    <property type="evidence" value="ECO:0000314"/>
    <property type="project" value="UniProtKB"/>
</dbReference>
<dbReference type="GO" id="GO:0005654">
    <property type="term" value="C:nucleoplasm"/>
    <property type="evidence" value="ECO:0000314"/>
    <property type="project" value="HPA"/>
</dbReference>
<dbReference type="GO" id="GO:0030670">
    <property type="term" value="C:phagocytic vesicle membrane"/>
    <property type="evidence" value="ECO:0007669"/>
    <property type="project" value="UniProtKB-SubCell"/>
</dbReference>
<dbReference type="GO" id="GO:0005886">
    <property type="term" value="C:plasma membrane"/>
    <property type="evidence" value="ECO:0000314"/>
    <property type="project" value="UniProtKB"/>
</dbReference>
<dbReference type="GO" id="GO:0043235">
    <property type="term" value="C:receptor complex"/>
    <property type="evidence" value="ECO:0000353"/>
    <property type="project" value="ComplexPortal"/>
</dbReference>
<dbReference type="GO" id="GO:0030667">
    <property type="term" value="C:secretory granule membrane"/>
    <property type="evidence" value="ECO:0000304"/>
    <property type="project" value="Reactome"/>
</dbReference>
<dbReference type="GO" id="GO:0035354">
    <property type="term" value="C:Toll-like receptor 1-Toll-like receptor 2 protein complex"/>
    <property type="evidence" value="ECO:0000314"/>
    <property type="project" value="MGI"/>
</dbReference>
<dbReference type="GO" id="GO:0035355">
    <property type="term" value="C:Toll-like receptor 2-Toll-like receptor 6 protein complex"/>
    <property type="evidence" value="ECO:0000314"/>
    <property type="project" value="UniProt"/>
</dbReference>
<dbReference type="GO" id="GO:0001540">
    <property type="term" value="F:amyloid-beta binding"/>
    <property type="evidence" value="ECO:0000314"/>
    <property type="project" value="ARUK-UCL"/>
</dbReference>
<dbReference type="GO" id="GO:0042802">
    <property type="term" value="F:identical protein binding"/>
    <property type="evidence" value="ECO:0000353"/>
    <property type="project" value="IntAct"/>
</dbReference>
<dbReference type="GO" id="GO:0001530">
    <property type="term" value="F:lipopolysaccharide binding"/>
    <property type="evidence" value="ECO:0000314"/>
    <property type="project" value="UniProtKB"/>
</dbReference>
<dbReference type="GO" id="GO:0001875">
    <property type="term" value="F:lipopolysaccharide immune receptor activity"/>
    <property type="evidence" value="ECO:0000304"/>
    <property type="project" value="UniProtKB"/>
</dbReference>
<dbReference type="GO" id="GO:0061809">
    <property type="term" value="F:NAD+ nucleosidase activity, cyclic ADP-ribose generating"/>
    <property type="evidence" value="ECO:0007669"/>
    <property type="project" value="UniProtKB-EC"/>
</dbReference>
<dbReference type="GO" id="GO:0038187">
    <property type="term" value="F:pattern recognition receptor activity"/>
    <property type="evidence" value="ECO:0000314"/>
    <property type="project" value="UniProtKB"/>
</dbReference>
<dbReference type="GO" id="GO:0042834">
    <property type="term" value="F:peptidoglycan binding"/>
    <property type="evidence" value="ECO:0000314"/>
    <property type="project" value="UniProtKB"/>
</dbReference>
<dbReference type="GO" id="GO:0044877">
    <property type="term" value="F:protein-containing complex binding"/>
    <property type="evidence" value="ECO:0000353"/>
    <property type="project" value="ARUK-UCL"/>
</dbReference>
<dbReference type="GO" id="GO:0038023">
    <property type="term" value="F:signaling receptor activity"/>
    <property type="evidence" value="ECO:0000318"/>
    <property type="project" value="GO_Central"/>
</dbReference>
<dbReference type="GO" id="GO:0035325">
    <property type="term" value="F:Toll-like receptor binding"/>
    <property type="evidence" value="ECO:0000353"/>
    <property type="project" value="UniProtKB"/>
</dbReference>
<dbReference type="GO" id="GO:0004888">
    <property type="term" value="F:transmembrane signaling receptor activity"/>
    <property type="evidence" value="ECO:0007669"/>
    <property type="project" value="InterPro"/>
</dbReference>
<dbReference type="GO" id="GO:0042497">
    <property type="term" value="F:triacyl lipopeptide binding"/>
    <property type="evidence" value="ECO:0000314"/>
    <property type="project" value="MGI"/>
</dbReference>
<dbReference type="GO" id="GO:0006915">
    <property type="term" value="P:apoptotic process"/>
    <property type="evidence" value="ECO:0000304"/>
    <property type="project" value="ProtInc"/>
</dbReference>
<dbReference type="GO" id="GO:0071221">
    <property type="term" value="P:cellular response to bacterial lipopeptide"/>
    <property type="evidence" value="ECO:0000304"/>
    <property type="project" value="BHF-UCL"/>
</dbReference>
<dbReference type="GO" id="GO:0071726">
    <property type="term" value="P:cellular response to diacyl bacterial lipopeptide"/>
    <property type="evidence" value="ECO:0000314"/>
    <property type="project" value="UniProtKB"/>
</dbReference>
<dbReference type="GO" id="GO:0071223">
    <property type="term" value="P:cellular response to lipoteichoic acid"/>
    <property type="evidence" value="ECO:0000314"/>
    <property type="project" value="MGI"/>
</dbReference>
<dbReference type="GO" id="GO:0071727">
    <property type="term" value="P:cellular response to triacyl bacterial lipopeptide"/>
    <property type="evidence" value="ECO:0000314"/>
    <property type="project" value="UniProtKB"/>
</dbReference>
<dbReference type="GO" id="GO:0071346">
    <property type="term" value="P:cellular response to type II interferon"/>
    <property type="evidence" value="ECO:0000314"/>
    <property type="project" value="UniProtKB"/>
</dbReference>
<dbReference type="GO" id="GO:0050830">
    <property type="term" value="P:defense response to Gram-positive bacterium"/>
    <property type="evidence" value="ECO:0000314"/>
    <property type="project" value="UniProtKB"/>
</dbReference>
<dbReference type="GO" id="GO:0051607">
    <property type="term" value="P:defense response to virus"/>
    <property type="evidence" value="ECO:0000270"/>
    <property type="project" value="ARUK-UCL"/>
</dbReference>
<dbReference type="GO" id="GO:0042496">
    <property type="term" value="P:detection of diacyl bacterial lipopeptide"/>
    <property type="evidence" value="ECO:0000314"/>
    <property type="project" value="MGI"/>
</dbReference>
<dbReference type="GO" id="GO:0042495">
    <property type="term" value="P:detection of triacyl bacterial lipopeptide"/>
    <property type="evidence" value="ECO:0000314"/>
    <property type="project" value="MGI"/>
</dbReference>
<dbReference type="GO" id="GO:0006955">
    <property type="term" value="P:immune response"/>
    <property type="evidence" value="ECO:0000304"/>
    <property type="project" value="ProtInc"/>
</dbReference>
<dbReference type="GO" id="GO:0006954">
    <property type="term" value="P:inflammatory response"/>
    <property type="evidence" value="ECO:0000318"/>
    <property type="project" value="GO_Central"/>
</dbReference>
<dbReference type="GO" id="GO:0045087">
    <property type="term" value="P:innate immune response"/>
    <property type="evidence" value="ECO:0000304"/>
    <property type="project" value="BHF-UCL"/>
</dbReference>
<dbReference type="GO" id="GO:0007612">
    <property type="term" value="P:learning"/>
    <property type="evidence" value="ECO:0000250"/>
    <property type="project" value="ARUK-UCL"/>
</dbReference>
<dbReference type="GO" id="GO:0014005">
    <property type="term" value="P:microglia development"/>
    <property type="evidence" value="ECO:0000250"/>
    <property type="project" value="ARUK-UCL"/>
</dbReference>
<dbReference type="GO" id="GO:0050765">
    <property type="term" value="P:negative regulation of phagocytosis"/>
    <property type="evidence" value="ECO:0000250"/>
    <property type="project" value="ARUK-UCL"/>
</dbReference>
<dbReference type="GO" id="GO:0051964">
    <property type="term" value="P:negative regulation of synapse assembly"/>
    <property type="evidence" value="ECO:0000250"/>
    <property type="project" value="ARUK-UCL"/>
</dbReference>
<dbReference type="GO" id="GO:0043123">
    <property type="term" value="P:positive regulation of canonical NF-kappaB signal transduction"/>
    <property type="evidence" value="ECO:0000314"/>
    <property type="project" value="BHF-UCL"/>
</dbReference>
<dbReference type="GO" id="GO:1903974">
    <property type="term" value="P:positive regulation of cellular response to macrophage colony-stimulating factor stimulus"/>
    <property type="evidence" value="ECO:0000314"/>
    <property type="project" value="UniProtKB"/>
</dbReference>
<dbReference type="GO" id="GO:0032722">
    <property type="term" value="P:positive regulation of chemokine production"/>
    <property type="evidence" value="ECO:0000314"/>
    <property type="project" value="BHF-UCL"/>
</dbReference>
<dbReference type="GO" id="GO:0010628">
    <property type="term" value="P:positive regulation of gene expression"/>
    <property type="evidence" value="ECO:0000315"/>
    <property type="project" value="UniProtKB"/>
</dbReference>
<dbReference type="GO" id="GO:0050729">
    <property type="term" value="P:positive regulation of inflammatory response"/>
    <property type="evidence" value="ECO:0000314"/>
    <property type="project" value="BHF-UCL"/>
</dbReference>
<dbReference type="GO" id="GO:0032728">
    <property type="term" value="P:positive regulation of interferon-beta production"/>
    <property type="evidence" value="ECO:0000250"/>
    <property type="project" value="BHF-UCL"/>
</dbReference>
<dbReference type="GO" id="GO:0032735">
    <property type="term" value="P:positive regulation of interleukin-12 production"/>
    <property type="evidence" value="ECO:0000250"/>
    <property type="project" value="BHF-UCL"/>
</dbReference>
<dbReference type="GO" id="GO:0032741">
    <property type="term" value="P:positive regulation of interleukin-18 production"/>
    <property type="evidence" value="ECO:0000250"/>
    <property type="project" value="BHF-UCL"/>
</dbReference>
<dbReference type="GO" id="GO:0032755">
    <property type="term" value="P:positive regulation of interleukin-6 production"/>
    <property type="evidence" value="ECO:0000314"/>
    <property type="project" value="BHF-UCL"/>
</dbReference>
<dbReference type="GO" id="GO:0032757">
    <property type="term" value="P:positive regulation of interleukin-8 production"/>
    <property type="evidence" value="ECO:0000314"/>
    <property type="project" value="BHF-UCL"/>
</dbReference>
<dbReference type="GO" id="GO:1904466">
    <property type="term" value="P:positive regulation of matrix metallopeptidase secretion"/>
    <property type="evidence" value="ECO:0000316"/>
    <property type="project" value="ARUK-UCL"/>
</dbReference>
<dbReference type="GO" id="GO:0051092">
    <property type="term" value="P:positive regulation of NF-kappaB transcription factor activity"/>
    <property type="evidence" value="ECO:0000314"/>
    <property type="project" value="UniProtKB"/>
</dbReference>
<dbReference type="GO" id="GO:0045944">
    <property type="term" value="P:positive regulation of transcription by RNA polymerase II"/>
    <property type="evidence" value="ECO:0000250"/>
    <property type="project" value="BHF-UCL"/>
</dbReference>
<dbReference type="GO" id="GO:0032760">
    <property type="term" value="P:positive regulation of tumor necrosis factor production"/>
    <property type="evidence" value="ECO:0000250"/>
    <property type="project" value="ARUK-UCL"/>
</dbReference>
<dbReference type="GO" id="GO:0030177">
    <property type="term" value="P:positive regulation of Wnt signaling pathway"/>
    <property type="evidence" value="ECO:0000315"/>
    <property type="project" value="BHF-UCL"/>
</dbReference>
<dbReference type="GO" id="GO:0007165">
    <property type="term" value="P:signal transduction"/>
    <property type="evidence" value="ECO:0000304"/>
    <property type="project" value="UniProtKB"/>
</dbReference>
<dbReference type="GO" id="GO:0034134">
    <property type="term" value="P:toll-like receptor 2 signaling pathway"/>
    <property type="evidence" value="ECO:0000314"/>
    <property type="project" value="BHF-UCL"/>
</dbReference>
<dbReference type="GO" id="GO:0002224">
    <property type="term" value="P:toll-like receptor signaling pathway"/>
    <property type="evidence" value="ECO:0000314"/>
    <property type="project" value="ComplexPortal"/>
</dbReference>
<dbReference type="GO" id="GO:0038124">
    <property type="term" value="P:toll-like receptor TLR6:TLR2 signaling pathway"/>
    <property type="evidence" value="ECO:0000314"/>
    <property type="project" value="ComplexPortal"/>
</dbReference>
<dbReference type="FunFam" id="3.40.50.10140:FF:000001">
    <property type="entry name" value="Toll-like receptor 2"/>
    <property type="match status" value="1"/>
</dbReference>
<dbReference type="FunFam" id="3.80.10.10:FF:000046">
    <property type="entry name" value="Toll-like receptor 2"/>
    <property type="match status" value="1"/>
</dbReference>
<dbReference type="Gene3D" id="3.80.10.10">
    <property type="entry name" value="Ribonuclease Inhibitor"/>
    <property type="match status" value="1"/>
</dbReference>
<dbReference type="Gene3D" id="3.40.50.10140">
    <property type="entry name" value="Toll/interleukin-1 receptor homology (TIR) domain"/>
    <property type="match status" value="1"/>
</dbReference>
<dbReference type="InterPro" id="IPR000483">
    <property type="entry name" value="Cys-rich_flank_reg_C"/>
</dbReference>
<dbReference type="InterPro" id="IPR001611">
    <property type="entry name" value="Leu-rich_rpt"/>
</dbReference>
<dbReference type="InterPro" id="IPR003591">
    <property type="entry name" value="Leu-rich_rpt_typical-subtyp"/>
</dbReference>
<dbReference type="InterPro" id="IPR032675">
    <property type="entry name" value="LRR_dom_sf"/>
</dbReference>
<dbReference type="InterPro" id="IPR000157">
    <property type="entry name" value="TIR_dom"/>
</dbReference>
<dbReference type="InterPro" id="IPR017241">
    <property type="entry name" value="Toll-like_receptor"/>
</dbReference>
<dbReference type="InterPro" id="IPR035897">
    <property type="entry name" value="Toll_tir_struct_dom_sf"/>
</dbReference>
<dbReference type="PANTHER" id="PTHR24365">
    <property type="entry name" value="TOLL-LIKE RECEPTOR"/>
    <property type="match status" value="1"/>
</dbReference>
<dbReference type="PANTHER" id="PTHR24365:SF17">
    <property type="entry name" value="TOLL-LIKE RECEPTOR 2"/>
    <property type="match status" value="1"/>
</dbReference>
<dbReference type="Pfam" id="PF00560">
    <property type="entry name" value="LRR_1"/>
    <property type="match status" value="1"/>
</dbReference>
<dbReference type="Pfam" id="PF13855">
    <property type="entry name" value="LRR_8"/>
    <property type="match status" value="2"/>
</dbReference>
<dbReference type="Pfam" id="PF01463">
    <property type="entry name" value="LRRCT"/>
    <property type="match status" value="1"/>
</dbReference>
<dbReference type="Pfam" id="PF01582">
    <property type="entry name" value="TIR"/>
    <property type="match status" value="1"/>
</dbReference>
<dbReference type="PIRSF" id="PIRSF037595">
    <property type="entry name" value="Toll-like_receptor"/>
    <property type="match status" value="1"/>
</dbReference>
<dbReference type="PRINTS" id="PR01537">
    <property type="entry name" value="INTRLKN1R1F"/>
</dbReference>
<dbReference type="PRINTS" id="PR00019">
    <property type="entry name" value="LEURICHRPT"/>
</dbReference>
<dbReference type="SMART" id="SM00364">
    <property type="entry name" value="LRR_BAC"/>
    <property type="match status" value="4"/>
</dbReference>
<dbReference type="SMART" id="SM00369">
    <property type="entry name" value="LRR_TYP"/>
    <property type="match status" value="7"/>
</dbReference>
<dbReference type="SMART" id="SM00082">
    <property type="entry name" value="LRRCT"/>
    <property type="match status" value="1"/>
</dbReference>
<dbReference type="SMART" id="SM00255">
    <property type="entry name" value="TIR"/>
    <property type="match status" value="1"/>
</dbReference>
<dbReference type="SUPFAM" id="SSF52058">
    <property type="entry name" value="L domain-like"/>
    <property type="match status" value="1"/>
</dbReference>
<dbReference type="SUPFAM" id="SSF52047">
    <property type="entry name" value="RNI-like"/>
    <property type="match status" value="1"/>
</dbReference>
<dbReference type="SUPFAM" id="SSF52200">
    <property type="entry name" value="Toll/Interleukin receptor TIR domain"/>
    <property type="match status" value="1"/>
</dbReference>
<dbReference type="PROSITE" id="PS51450">
    <property type="entry name" value="LRR"/>
    <property type="match status" value="11"/>
</dbReference>
<dbReference type="PROSITE" id="PS50104">
    <property type="entry name" value="TIR"/>
    <property type="match status" value="1"/>
</dbReference>
<evidence type="ECO:0000250" key="1"/>
<evidence type="ECO:0000250" key="2">
    <source>
        <dbReference type="UniProtKB" id="O00206"/>
    </source>
</evidence>
<evidence type="ECO:0000250" key="3">
    <source>
        <dbReference type="UniProtKB" id="Q9QUN7"/>
    </source>
</evidence>
<evidence type="ECO:0000255" key="4"/>
<evidence type="ECO:0000255" key="5">
    <source>
        <dbReference type="PROSITE-ProRule" id="PRU00204"/>
    </source>
</evidence>
<evidence type="ECO:0000269" key="6">
    <source>
    </source>
</evidence>
<evidence type="ECO:0000269" key="7">
    <source>
    </source>
</evidence>
<evidence type="ECO:0000269" key="8">
    <source>
    </source>
</evidence>
<evidence type="ECO:0000269" key="9">
    <source>
    </source>
</evidence>
<evidence type="ECO:0000269" key="10">
    <source>
    </source>
</evidence>
<evidence type="ECO:0000269" key="11">
    <source>
    </source>
</evidence>
<evidence type="ECO:0000269" key="12">
    <source>
    </source>
</evidence>
<evidence type="ECO:0000269" key="13">
    <source>
    </source>
</evidence>
<evidence type="ECO:0000269" key="14">
    <source>
    </source>
</evidence>
<evidence type="ECO:0000269" key="15">
    <source>
    </source>
</evidence>
<evidence type="ECO:0000269" key="16">
    <source>
    </source>
</evidence>
<evidence type="ECO:0000269" key="17">
    <source>
    </source>
</evidence>
<evidence type="ECO:0000269" key="18">
    <source>
    </source>
</evidence>
<evidence type="ECO:0000269" key="19">
    <source>
    </source>
</evidence>
<evidence type="ECO:0000269" key="20">
    <source>
    </source>
</evidence>
<evidence type="ECO:0000269" key="21">
    <source>
    </source>
</evidence>
<evidence type="ECO:0000269" key="22">
    <source>
    </source>
</evidence>
<evidence type="ECO:0000269" key="23">
    <source>
    </source>
</evidence>
<evidence type="ECO:0000269" key="24">
    <source>
    </source>
</evidence>
<evidence type="ECO:0000269" key="25">
    <source>
    </source>
</evidence>
<evidence type="ECO:0000269" key="26">
    <source>
    </source>
</evidence>
<evidence type="ECO:0000269" key="27">
    <source>
    </source>
</evidence>
<evidence type="ECO:0000269" key="28">
    <source>
    </source>
</evidence>
<evidence type="ECO:0000305" key="29"/>
<evidence type="ECO:0000312" key="30">
    <source>
        <dbReference type="HGNC" id="HGNC:11848"/>
    </source>
</evidence>
<evidence type="ECO:0007829" key="31">
    <source>
        <dbReference type="PDB" id="1FYW"/>
    </source>
</evidence>
<evidence type="ECO:0007829" key="32">
    <source>
        <dbReference type="PDB" id="1FYX"/>
    </source>
</evidence>
<evidence type="ECO:0007829" key="33">
    <source>
        <dbReference type="PDB" id="1O77"/>
    </source>
</evidence>
<evidence type="ECO:0007829" key="34">
    <source>
        <dbReference type="PDB" id="2Z7X"/>
    </source>
</evidence>
<evidence type="ECO:0007829" key="35">
    <source>
        <dbReference type="PDB" id="2Z80"/>
    </source>
</evidence>
<evidence type="ECO:0007829" key="36">
    <source>
        <dbReference type="PDB" id="6NIG"/>
    </source>
</evidence>
<evidence type="ECO:0007829" key="37">
    <source>
        <dbReference type="PDB" id="8AR0"/>
    </source>
</evidence>